<feature type="chain" id="PRO_0000137824" description="Argininosuccinate lyase">
    <location>
        <begin position="1"/>
        <end position="459"/>
    </location>
</feature>
<name>ARLY_STAAR</name>
<proteinExistence type="inferred from homology"/>
<keyword id="KW-0028">Amino-acid biosynthesis</keyword>
<keyword id="KW-0055">Arginine biosynthesis</keyword>
<keyword id="KW-0963">Cytoplasm</keyword>
<keyword id="KW-0456">Lyase</keyword>
<protein>
    <recommendedName>
        <fullName evidence="1">Argininosuccinate lyase</fullName>
        <shortName evidence="1">ASAL</shortName>
        <ecNumber evidence="1">4.3.2.1</ecNumber>
    </recommendedName>
    <alternativeName>
        <fullName evidence="1">Arginosuccinase</fullName>
    </alternativeName>
</protein>
<accession>Q6GIC8</accession>
<gene>
    <name evidence="1" type="primary">argH</name>
    <name type="ordered locus">SAR0922</name>
</gene>
<sequence length="459" mass="52033">MSNKAWGGRFEVQPEEWVDDFNASITFDQTLIDQDIEGSIAHATMLANQGIISQQDSEQIIQGLKSIQHDYHQDQIQFSASLEDIHLNIEHELIKRIGDAGGKLHTGRSRNDQVATDMHLYTKKQVQDIIALIKSLQSVIVDIASNNVDTIMPGYTHLQRAQPISFAHHIMTYFWMLQRDQQRFEDSLKRIDINPLGAAALSGTTYPIDRHETTALLNFGSLYENSLDAVSDRDYIIETLHNISLTMVHLSRFAEEIIFWSTDEAKFITLSDAFSTGSSIMPQKKNPDMAELIRGKVGRTTGHLMSMLMTLKGLPLAYNKDMQEDKEGLFDAVHTIKGSLRIFEGMIQTMTINKERLNQTVKEDFSNATELADYLVTKNIPFRTAHEIVGKIVLECIQQGHYLLDVPLSTYQQHHSSIDADIYDYLQPENCLKRRQSYGSTGQSSVKQQLDVAKQLLSQ</sequence>
<organism>
    <name type="scientific">Staphylococcus aureus (strain MRSA252)</name>
    <dbReference type="NCBI Taxonomy" id="282458"/>
    <lineage>
        <taxon>Bacteria</taxon>
        <taxon>Bacillati</taxon>
        <taxon>Bacillota</taxon>
        <taxon>Bacilli</taxon>
        <taxon>Bacillales</taxon>
        <taxon>Staphylococcaceae</taxon>
        <taxon>Staphylococcus</taxon>
    </lineage>
</organism>
<reference key="1">
    <citation type="journal article" date="2004" name="Proc. Natl. Acad. Sci. U.S.A.">
        <title>Complete genomes of two clinical Staphylococcus aureus strains: evidence for the rapid evolution of virulence and drug resistance.</title>
        <authorList>
            <person name="Holden M.T.G."/>
            <person name="Feil E.J."/>
            <person name="Lindsay J.A."/>
            <person name="Peacock S.J."/>
            <person name="Day N.P.J."/>
            <person name="Enright M.C."/>
            <person name="Foster T.J."/>
            <person name="Moore C.E."/>
            <person name="Hurst L."/>
            <person name="Atkin R."/>
            <person name="Barron A."/>
            <person name="Bason N."/>
            <person name="Bentley S.D."/>
            <person name="Chillingworth C."/>
            <person name="Chillingworth T."/>
            <person name="Churcher C."/>
            <person name="Clark L."/>
            <person name="Corton C."/>
            <person name="Cronin A."/>
            <person name="Doggett J."/>
            <person name="Dowd L."/>
            <person name="Feltwell T."/>
            <person name="Hance Z."/>
            <person name="Harris B."/>
            <person name="Hauser H."/>
            <person name="Holroyd S."/>
            <person name="Jagels K."/>
            <person name="James K.D."/>
            <person name="Lennard N."/>
            <person name="Line A."/>
            <person name="Mayes R."/>
            <person name="Moule S."/>
            <person name="Mungall K."/>
            <person name="Ormond D."/>
            <person name="Quail M.A."/>
            <person name="Rabbinowitsch E."/>
            <person name="Rutherford K.M."/>
            <person name="Sanders M."/>
            <person name="Sharp S."/>
            <person name="Simmonds M."/>
            <person name="Stevens K."/>
            <person name="Whitehead S."/>
            <person name="Barrell B.G."/>
            <person name="Spratt B.G."/>
            <person name="Parkhill J."/>
        </authorList>
    </citation>
    <scope>NUCLEOTIDE SEQUENCE [LARGE SCALE GENOMIC DNA]</scope>
    <source>
        <strain>MRSA252</strain>
    </source>
</reference>
<comment type="catalytic activity">
    <reaction evidence="1">
        <text>2-(N(omega)-L-arginino)succinate = fumarate + L-arginine</text>
        <dbReference type="Rhea" id="RHEA:24020"/>
        <dbReference type="ChEBI" id="CHEBI:29806"/>
        <dbReference type="ChEBI" id="CHEBI:32682"/>
        <dbReference type="ChEBI" id="CHEBI:57472"/>
        <dbReference type="EC" id="4.3.2.1"/>
    </reaction>
</comment>
<comment type="pathway">
    <text evidence="1">Amino-acid biosynthesis; L-arginine biosynthesis; L-arginine from L-ornithine and carbamoyl phosphate: step 3/3.</text>
</comment>
<comment type="subcellular location">
    <subcellularLocation>
        <location evidence="1">Cytoplasm</location>
    </subcellularLocation>
</comment>
<comment type="similarity">
    <text evidence="1">Belongs to the lyase 1 family. Argininosuccinate lyase subfamily.</text>
</comment>
<evidence type="ECO:0000255" key="1">
    <source>
        <dbReference type="HAMAP-Rule" id="MF_00006"/>
    </source>
</evidence>
<dbReference type="EC" id="4.3.2.1" evidence="1"/>
<dbReference type="EMBL" id="BX571856">
    <property type="protein sequence ID" value="CAG39928.1"/>
    <property type="molecule type" value="Genomic_DNA"/>
</dbReference>
<dbReference type="RefSeq" id="WP_000066056.1">
    <property type="nucleotide sequence ID" value="NC_002952.2"/>
</dbReference>
<dbReference type="SMR" id="Q6GIC8"/>
<dbReference type="KEGG" id="sar:SAR0922"/>
<dbReference type="HOGENOM" id="CLU_027272_2_3_9"/>
<dbReference type="UniPathway" id="UPA00068">
    <property type="reaction ID" value="UER00114"/>
</dbReference>
<dbReference type="Proteomes" id="UP000000596">
    <property type="component" value="Chromosome"/>
</dbReference>
<dbReference type="GO" id="GO:0005829">
    <property type="term" value="C:cytosol"/>
    <property type="evidence" value="ECO:0007669"/>
    <property type="project" value="TreeGrafter"/>
</dbReference>
<dbReference type="GO" id="GO:0004056">
    <property type="term" value="F:argininosuccinate lyase activity"/>
    <property type="evidence" value="ECO:0007669"/>
    <property type="project" value="UniProtKB-UniRule"/>
</dbReference>
<dbReference type="GO" id="GO:0042450">
    <property type="term" value="P:arginine biosynthetic process via ornithine"/>
    <property type="evidence" value="ECO:0007669"/>
    <property type="project" value="InterPro"/>
</dbReference>
<dbReference type="GO" id="GO:0006526">
    <property type="term" value="P:L-arginine biosynthetic process"/>
    <property type="evidence" value="ECO:0007669"/>
    <property type="project" value="UniProtKB-UniRule"/>
</dbReference>
<dbReference type="CDD" id="cd01359">
    <property type="entry name" value="Argininosuccinate_lyase"/>
    <property type="match status" value="1"/>
</dbReference>
<dbReference type="FunFam" id="1.10.275.10:FF:000002">
    <property type="entry name" value="Argininosuccinate lyase"/>
    <property type="match status" value="1"/>
</dbReference>
<dbReference type="FunFam" id="1.10.40.30:FF:000001">
    <property type="entry name" value="Argininosuccinate lyase"/>
    <property type="match status" value="1"/>
</dbReference>
<dbReference type="FunFam" id="1.20.200.10:FF:000006">
    <property type="entry name" value="Argininosuccinate lyase"/>
    <property type="match status" value="1"/>
</dbReference>
<dbReference type="Gene3D" id="1.10.40.30">
    <property type="entry name" value="Fumarase/aspartase (C-terminal domain)"/>
    <property type="match status" value="1"/>
</dbReference>
<dbReference type="Gene3D" id="1.20.200.10">
    <property type="entry name" value="Fumarase/aspartase (Central domain)"/>
    <property type="match status" value="1"/>
</dbReference>
<dbReference type="Gene3D" id="1.10.275.10">
    <property type="entry name" value="Fumarase/aspartase (N-terminal domain)"/>
    <property type="match status" value="1"/>
</dbReference>
<dbReference type="HAMAP" id="MF_00006">
    <property type="entry name" value="Arg_succ_lyase"/>
    <property type="match status" value="1"/>
</dbReference>
<dbReference type="InterPro" id="IPR029419">
    <property type="entry name" value="Arg_succ_lyase_C"/>
</dbReference>
<dbReference type="InterPro" id="IPR009049">
    <property type="entry name" value="Argininosuccinate_lyase"/>
</dbReference>
<dbReference type="InterPro" id="IPR024083">
    <property type="entry name" value="Fumarase/histidase_N"/>
</dbReference>
<dbReference type="InterPro" id="IPR020557">
    <property type="entry name" value="Fumarate_lyase_CS"/>
</dbReference>
<dbReference type="InterPro" id="IPR000362">
    <property type="entry name" value="Fumarate_lyase_fam"/>
</dbReference>
<dbReference type="InterPro" id="IPR022761">
    <property type="entry name" value="Fumarate_lyase_N"/>
</dbReference>
<dbReference type="InterPro" id="IPR008948">
    <property type="entry name" value="L-Aspartase-like"/>
</dbReference>
<dbReference type="NCBIfam" id="TIGR00838">
    <property type="entry name" value="argH"/>
    <property type="match status" value="1"/>
</dbReference>
<dbReference type="PANTHER" id="PTHR43814">
    <property type="entry name" value="ARGININOSUCCINATE LYASE"/>
    <property type="match status" value="1"/>
</dbReference>
<dbReference type="PANTHER" id="PTHR43814:SF1">
    <property type="entry name" value="ARGININOSUCCINATE LYASE"/>
    <property type="match status" value="1"/>
</dbReference>
<dbReference type="Pfam" id="PF14698">
    <property type="entry name" value="ASL_C2"/>
    <property type="match status" value="1"/>
</dbReference>
<dbReference type="Pfam" id="PF00206">
    <property type="entry name" value="Lyase_1"/>
    <property type="match status" value="1"/>
</dbReference>
<dbReference type="PRINTS" id="PR00145">
    <property type="entry name" value="ARGSUCLYASE"/>
</dbReference>
<dbReference type="PRINTS" id="PR00149">
    <property type="entry name" value="FUMRATELYASE"/>
</dbReference>
<dbReference type="SUPFAM" id="SSF48557">
    <property type="entry name" value="L-aspartase-like"/>
    <property type="match status" value="1"/>
</dbReference>
<dbReference type="PROSITE" id="PS00163">
    <property type="entry name" value="FUMARATE_LYASES"/>
    <property type="match status" value="1"/>
</dbReference>